<evidence type="ECO:0000255" key="1">
    <source>
        <dbReference type="PROSITE-ProRule" id="PRU00303"/>
    </source>
</evidence>
<evidence type="ECO:0000269" key="2">
    <source>
    </source>
</evidence>
<evidence type="ECO:0000305" key="3"/>
<evidence type="ECO:0007744" key="4">
    <source>
        <dbReference type="PDB" id="4K0U"/>
    </source>
</evidence>
<evidence type="ECO:0007829" key="5">
    <source>
        <dbReference type="PDB" id="3UTK"/>
    </source>
</evidence>
<evidence type="ECO:0007829" key="6">
    <source>
        <dbReference type="PDB" id="4K0U"/>
    </source>
</evidence>
<sequence length="133" mass="14334">MHVSSLKVVLFGVCCLSLAACQTPAPVKNTASRSAASVPANEQISQLASLVAASKYLRVQCERSDLPDDGTILKTAVNVAVQKGWDTGRYQSLPQLSENLYQGLLKDGTPKATQCSSFNRTMTPFLDAMRTVR</sequence>
<organism>
    <name type="scientific">Dickeya dadantii (strain 3937)</name>
    <name type="common">Erwinia chrysanthemi (strain 3937)</name>
    <dbReference type="NCBI Taxonomy" id="198628"/>
    <lineage>
        <taxon>Bacteria</taxon>
        <taxon>Pseudomonadati</taxon>
        <taxon>Pseudomonadota</taxon>
        <taxon>Gammaproteobacteria</taxon>
        <taxon>Enterobacterales</taxon>
        <taxon>Pectobacteriaceae</taxon>
        <taxon>Dickeya</taxon>
    </lineage>
</organism>
<comment type="function">
    <text>Out proteins are required for the translocation of pectate lyases and cellulases across the outer membrane.</text>
</comment>
<comment type="subunit">
    <text evidence="2">Interacts with secretin OutD.</text>
</comment>
<comment type="subcellular location">
    <subcellularLocation>
        <location evidence="3">Cell outer membrane</location>
        <topology evidence="1">Lipid-anchor</topology>
    </subcellularLocation>
</comment>
<comment type="similarity">
    <text evidence="3">To K.pneumoniae PulS.</text>
</comment>
<accession>Q01567</accession>
<accession>E0SM45</accession>
<proteinExistence type="evidence at protein level"/>
<protein>
    <recommendedName>
        <fullName>Pilotin OutS</fullName>
    </recommendedName>
    <alternativeName>
        <fullName>Lipoprotein OutS</fullName>
    </alternativeName>
</protein>
<keyword id="KW-0002">3D-structure</keyword>
<keyword id="KW-0998">Cell outer membrane</keyword>
<keyword id="KW-1015">Disulfide bond</keyword>
<keyword id="KW-0449">Lipoprotein</keyword>
<keyword id="KW-0472">Membrane</keyword>
<keyword id="KW-0564">Palmitate</keyword>
<keyword id="KW-0653">Protein transport</keyword>
<keyword id="KW-1185">Reference proteome</keyword>
<keyword id="KW-0732">Signal</keyword>
<keyword id="KW-0813">Transport</keyword>
<feature type="signal peptide" evidence="3">
    <location>
        <begin position="1"/>
        <end position="20"/>
    </location>
</feature>
<feature type="chain" id="PRO_0000018184" description="Pilotin OutS">
    <location>
        <begin position="21"/>
        <end position="133"/>
    </location>
</feature>
<feature type="lipid moiety-binding region" description="N-palmitoyl cysteine" evidence="3">
    <location>
        <position position="21"/>
    </location>
</feature>
<feature type="lipid moiety-binding region" description="S-diacylglycerol cysteine" evidence="3">
    <location>
        <position position="21"/>
    </location>
</feature>
<feature type="disulfide bond" evidence="2">
    <location>
        <begin position="61"/>
        <end position="115"/>
    </location>
</feature>
<feature type="helix" evidence="5">
    <location>
        <begin position="40"/>
        <end position="60"/>
    </location>
</feature>
<feature type="helix" evidence="5">
    <location>
        <begin position="69"/>
        <end position="82"/>
    </location>
</feature>
<feature type="helix" evidence="6">
    <location>
        <begin position="87"/>
        <end position="89"/>
    </location>
</feature>
<feature type="helix" evidence="5">
    <location>
        <begin position="94"/>
        <end position="106"/>
    </location>
</feature>
<feature type="helix" evidence="5">
    <location>
        <begin position="111"/>
        <end position="121"/>
    </location>
</feature>
<feature type="helix" evidence="5">
    <location>
        <begin position="123"/>
        <end position="131"/>
    </location>
</feature>
<dbReference type="EMBL" id="X65265">
    <property type="protein sequence ID" value="CAA46372.1"/>
    <property type="molecule type" value="Genomic_DNA"/>
</dbReference>
<dbReference type="EMBL" id="CP002038">
    <property type="protein sequence ID" value="ADM99380.1"/>
    <property type="molecule type" value="Genomic_DNA"/>
</dbReference>
<dbReference type="PIR" id="S28011">
    <property type="entry name" value="S28011"/>
</dbReference>
<dbReference type="RefSeq" id="WP_013318814.1">
    <property type="nucleotide sequence ID" value="NC_014500.1"/>
</dbReference>
<dbReference type="PDB" id="3UTK">
    <property type="method" value="X-ray"/>
    <property type="resolution" value="1.65 A"/>
    <property type="chains" value="A/B=1-133"/>
</dbReference>
<dbReference type="PDB" id="4K0U">
    <property type="method" value="X-ray"/>
    <property type="resolution" value="2.15 A"/>
    <property type="chains" value="A=28-133"/>
</dbReference>
<dbReference type="PDBsum" id="3UTK"/>
<dbReference type="PDBsum" id="4K0U"/>
<dbReference type="SMR" id="Q01567"/>
<dbReference type="STRING" id="198628.Dda3937_02411"/>
<dbReference type="TCDB" id="8.A.2.1.2">
    <property type="family name" value="the secretin auxiliary lipoprotein (sal) family"/>
</dbReference>
<dbReference type="GeneID" id="55489901"/>
<dbReference type="KEGG" id="ddd:Dda3937_02411"/>
<dbReference type="PATRIC" id="fig|198628.6.peg.3141"/>
<dbReference type="eggNOG" id="ENOG5032UQ7">
    <property type="taxonomic scope" value="Bacteria"/>
</dbReference>
<dbReference type="HOGENOM" id="CLU_154567_0_0_6"/>
<dbReference type="OrthoDB" id="6497279at2"/>
<dbReference type="EvolutionaryTrace" id="Q01567"/>
<dbReference type="Proteomes" id="UP000006859">
    <property type="component" value="Chromosome"/>
</dbReference>
<dbReference type="GO" id="GO:0009279">
    <property type="term" value="C:cell outer membrane"/>
    <property type="evidence" value="ECO:0000314"/>
    <property type="project" value="ASAP"/>
</dbReference>
<dbReference type="GO" id="GO:0006886">
    <property type="term" value="P:intracellular protein transport"/>
    <property type="evidence" value="ECO:0007669"/>
    <property type="project" value="InterPro"/>
</dbReference>
<dbReference type="GO" id="GO:0016485">
    <property type="term" value="P:protein processing"/>
    <property type="evidence" value="ECO:0000314"/>
    <property type="project" value="ASAP"/>
</dbReference>
<dbReference type="Gene3D" id="1.20.58.1630">
    <property type="entry name" value="Chaperone lipoprotein PulS/OutS"/>
    <property type="match status" value="1"/>
</dbReference>
<dbReference type="InterPro" id="IPR005699">
    <property type="entry name" value="Chap_lipoprot_PulS/OutS"/>
</dbReference>
<dbReference type="InterPro" id="IPR019114">
    <property type="entry name" value="Chap_lipoprot_PulS/OutS-like"/>
</dbReference>
<dbReference type="InterPro" id="IPR038432">
    <property type="entry name" value="PulS/OutS-like_sf"/>
</dbReference>
<dbReference type="NCBIfam" id="TIGR01004">
    <property type="entry name" value="PulS_OutS"/>
    <property type="match status" value="1"/>
</dbReference>
<dbReference type="Pfam" id="PF09691">
    <property type="entry name" value="T2SS_PulS_OutS"/>
    <property type="match status" value="1"/>
</dbReference>
<dbReference type="PROSITE" id="PS51257">
    <property type="entry name" value="PROKAR_LIPOPROTEIN"/>
    <property type="match status" value="1"/>
</dbReference>
<name>OUTS_DICD3</name>
<reference key="1">
    <citation type="journal article" date="1992" name="Mol. Microbiol.">
        <title>Some of the out genes involved in the secretion of pectate lyases in Erwinia chrysanthemi are regulated by kdgR.</title>
        <authorList>
            <person name="Condemine G."/>
            <person name="Dorel C."/>
            <person name="Hugouvieux-Cotte-Pattat N."/>
            <person name="Robert-Baudouy J."/>
        </authorList>
    </citation>
    <scope>NUCLEOTIDE SEQUENCE [GENOMIC DNA]</scope>
    <source>
        <strain>3937</strain>
    </source>
</reference>
<reference key="2">
    <citation type="submission" date="1998-05" db="EMBL/GenBank/DDBJ databases">
        <authorList>
            <person name="Condemine G."/>
        </authorList>
    </citation>
    <scope>SEQUENCE REVISION</scope>
</reference>
<reference key="3">
    <citation type="journal article" date="2011" name="J. Bacteriol.">
        <title>Genome sequence of the plant-pathogenic bacterium Dickeya dadantii 3937.</title>
        <authorList>
            <person name="Glasner J.D."/>
            <person name="Yang C.H."/>
            <person name="Reverchon S."/>
            <person name="Hugouvieux-Cotte-Pattat N."/>
            <person name="Condemine G."/>
            <person name="Bohin J.P."/>
            <person name="Van Gijsegem F."/>
            <person name="Yang S."/>
            <person name="Franza T."/>
            <person name="Expert D."/>
            <person name="Plunkett G. III"/>
            <person name="San Francisco M.J."/>
            <person name="Charkowski A.O."/>
            <person name="Py B."/>
            <person name="Bell K."/>
            <person name="Rauscher L."/>
            <person name="Rodriguez-Palenzuela P."/>
            <person name="Toussaint A."/>
            <person name="Holeva M.C."/>
            <person name="He S.Y."/>
            <person name="Douet V."/>
            <person name="Boccara M."/>
            <person name="Blanco C."/>
            <person name="Toth I."/>
            <person name="Anderson B.D."/>
            <person name="Biehl B.S."/>
            <person name="Mau B."/>
            <person name="Flynn S.M."/>
            <person name="Barras F."/>
            <person name="Lindeberg M."/>
            <person name="Birch P.R."/>
            <person name="Tsuyumu S."/>
            <person name="Shi X."/>
            <person name="Hibbing M."/>
            <person name="Yap M.N."/>
            <person name="Carpentier M."/>
            <person name="Dassa E."/>
            <person name="Umehara M."/>
            <person name="Kim J.F."/>
            <person name="Rusch M."/>
            <person name="Soni P."/>
            <person name="Mayhew G.F."/>
            <person name="Fouts D.E."/>
            <person name="Gill S.R."/>
            <person name="Blattner F.R."/>
            <person name="Keen N.T."/>
            <person name="Perna N.T."/>
        </authorList>
    </citation>
    <scope>NUCLEOTIDE SEQUENCE [LARGE SCALE GENOMIC DNA]</scope>
    <source>
        <strain>3937</strain>
    </source>
</reference>
<reference evidence="4" key="4">
    <citation type="journal article" date="2013" name="Acta Crystallogr. D">
        <title>Anatomy of secretin binding to the Dickeya dadantii type II secretion system pilotin.</title>
        <authorList>
            <person name="Rehman S."/>
            <person name="Gu S."/>
            <person name="Shevchik V.E."/>
            <person name="Pickersgill R.W."/>
        </authorList>
    </citation>
    <scope>X-RAY CRYSTALLOGRAPHY (2.15 ANGSTROMS) OF 28-133</scope>
    <scope>SUBUNIT</scope>
    <scope>DISULFIDE BOND</scope>
</reference>
<gene>
    <name type="primary">outS</name>
    <name type="ordered locus">Dda3937_02411</name>
</gene>